<evidence type="ECO:0000250" key="1"/>
<evidence type="ECO:0000255" key="2"/>
<evidence type="ECO:0000305" key="3"/>
<organism>
    <name type="scientific">Nostoc sp. (strain PCC 7120 / SAG 25.82 / UTEX 2576)</name>
    <dbReference type="NCBI Taxonomy" id="103690"/>
    <lineage>
        <taxon>Bacteria</taxon>
        <taxon>Bacillati</taxon>
        <taxon>Cyanobacteriota</taxon>
        <taxon>Cyanophyceae</taxon>
        <taxon>Nostocales</taxon>
        <taxon>Nostocaceae</taxon>
        <taxon>Nostoc</taxon>
    </lineage>
</organism>
<protein>
    <recommendedName>
        <fullName>Photosystem I P700 chlorophyll a apoprotein A2 2</fullName>
        <ecNumber>1.97.1.12</ecNumber>
    </recommendedName>
    <alternativeName>
        <fullName>PsaB 2</fullName>
    </alternativeName>
</protein>
<gene>
    <name type="primary">psaB2</name>
    <name type="ordered locus">alr5314</name>
</gene>
<keyword id="KW-0004">4Fe-4S</keyword>
<keyword id="KW-0148">Chlorophyll</keyword>
<keyword id="KW-0157">Chromophore</keyword>
<keyword id="KW-0249">Electron transport</keyword>
<keyword id="KW-0408">Iron</keyword>
<keyword id="KW-0411">Iron-sulfur</keyword>
<keyword id="KW-0460">Magnesium</keyword>
<keyword id="KW-0472">Membrane</keyword>
<keyword id="KW-0479">Metal-binding</keyword>
<keyword id="KW-0560">Oxidoreductase</keyword>
<keyword id="KW-0602">Photosynthesis</keyword>
<keyword id="KW-0603">Photosystem I</keyword>
<keyword id="KW-1185">Reference proteome</keyword>
<keyword id="KW-0793">Thylakoid</keyword>
<keyword id="KW-0812">Transmembrane</keyword>
<keyword id="KW-1133">Transmembrane helix</keyword>
<keyword id="KW-0813">Transport</keyword>
<dbReference type="EC" id="1.97.1.12"/>
<dbReference type="EMBL" id="BA000019">
    <property type="protein sequence ID" value="BAB77013.1"/>
    <property type="molecule type" value="Genomic_DNA"/>
</dbReference>
<dbReference type="PIR" id="AB2470">
    <property type="entry name" value="AB2470"/>
</dbReference>
<dbReference type="SMR" id="Q8YLI4"/>
<dbReference type="STRING" id="103690.gene:10497375"/>
<dbReference type="KEGG" id="ana:alr5314"/>
<dbReference type="eggNOG" id="COG2885">
    <property type="taxonomic scope" value="Bacteria"/>
</dbReference>
<dbReference type="OrthoDB" id="499313at2"/>
<dbReference type="Proteomes" id="UP000002483">
    <property type="component" value="Chromosome"/>
</dbReference>
<dbReference type="GO" id="GO:0009522">
    <property type="term" value="C:photosystem I"/>
    <property type="evidence" value="ECO:0007669"/>
    <property type="project" value="UniProtKB-KW"/>
</dbReference>
<dbReference type="GO" id="GO:0031676">
    <property type="term" value="C:plasma membrane-derived thylakoid membrane"/>
    <property type="evidence" value="ECO:0007669"/>
    <property type="project" value="UniProtKB-SubCell"/>
</dbReference>
<dbReference type="GO" id="GO:0051539">
    <property type="term" value="F:4 iron, 4 sulfur cluster binding"/>
    <property type="evidence" value="ECO:0007669"/>
    <property type="project" value="UniProtKB-KW"/>
</dbReference>
<dbReference type="GO" id="GO:0016168">
    <property type="term" value="F:chlorophyll binding"/>
    <property type="evidence" value="ECO:0007669"/>
    <property type="project" value="UniProtKB-KW"/>
</dbReference>
<dbReference type="GO" id="GO:0009055">
    <property type="term" value="F:electron transfer activity"/>
    <property type="evidence" value="ECO:0007669"/>
    <property type="project" value="UniProtKB-UniRule"/>
</dbReference>
<dbReference type="GO" id="GO:0000287">
    <property type="term" value="F:magnesium ion binding"/>
    <property type="evidence" value="ECO:0007669"/>
    <property type="project" value="UniProtKB-UniRule"/>
</dbReference>
<dbReference type="GO" id="GO:0016491">
    <property type="term" value="F:oxidoreductase activity"/>
    <property type="evidence" value="ECO:0007669"/>
    <property type="project" value="UniProtKB-KW"/>
</dbReference>
<dbReference type="GO" id="GO:0015979">
    <property type="term" value="P:photosynthesis"/>
    <property type="evidence" value="ECO:0007669"/>
    <property type="project" value="UniProtKB-UniRule"/>
</dbReference>
<dbReference type="FunFam" id="1.20.1130.10:FF:000001">
    <property type="entry name" value="Photosystem I P700 chlorophyll a apoprotein A2"/>
    <property type="match status" value="1"/>
</dbReference>
<dbReference type="Gene3D" id="1.20.1130.10">
    <property type="entry name" value="Photosystem I PsaA/PsaB"/>
    <property type="match status" value="1"/>
</dbReference>
<dbReference type="HAMAP" id="MF_00482">
    <property type="entry name" value="PSI_PsaB"/>
    <property type="match status" value="1"/>
</dbReference>
<dbReference type="InterPro" id="IPR001280">
    <property type="entry name" value="PSI_PsaA/B"/>
</dbReference>
<dbReference type="InterPro" id="IPR020586">
    <property type="entry name" value="PSI_PsaA/B_CS"/>
</dbReference>
<dbReference type="InterPro" id="IPR036408">
    <property type="entry name" value="PSI_PsaA/B_sf"/>
</dbReference>
<dbReference type="InterPro" id="IPR006244">
    <property type="entry name" value="PSI_PsaB"/>
</dbReference>
<dbReference type="NCBIfam" id="TIGR01336">
    <property type="entry name" value="psaB"/>
    <property type="match status" value="1"/>
</dbReference>
<dbReference type="PANTHER" id="PTHR30128">
    <property type="entry name" value="OUTER MEMBRANE PROTEIN, OMPA-RELATED"/>
    <property type="match status" value="1"/>
</dbReference>
<dbReference type="PANTHER" id="PTHR30128:SF19">
    <property type="entry name" value="PHOTOSYSTEM I P700 CHLOROPHYLL A APOPROTEIN A1-RELATED"/>
    <property type="match status" value="1"/>
</dbReference>
<dbReference type="Pfam" id="PF00223">
    <property type="entry name" value="PsaA_PsaB"/>
    <property type="match status" value="1"/>
</dbReference>
<dbReference type="PIRSF" id="PIRSF002905">
    <property type="entry name" value="PSI_A"/>
    <property type="match status" value="1"/>
</dbReference>
<dbReference type="PRINTS" id="PR00257">
    <property type="entry name" value="PHOTSYSPSAAB"/>
</dbReference>
<dbReference type="SUPFAM" id="SSF81558">
    <property type="entry name" value="Photosystem I subunits PsaA/PsaB"/>
    <property type="match status" value="1"/>
</dbReference>
<dbReference type="PROSITE" id="PS00419">
    <property type="entry name" value="PHOTOSYSTEM_I_PSAAB"/>
    <property type="match status" value="1"/>
</dbReference>
<reference key="1">
    <citation type="journal article" date="2001" name="DNA Res.">
        <title>Complete genomic sequence of the filamentous nitrogen-fixing cyanobacterium Anabaena sp. strain PCC 7120.</title>
        <authorList>
            <person name="Kaneko T."/>
            <person name="Nakamura Y."/>
            <person name="Wolk C.P."/>
            <person name="Kuritz T."/>
            <person name="Sasamoto S."/>
            <person name="Watanabe A."/>
            <person name="Iriguchi M."/>
            <person name="Ishikawa A."/>
            <person name="Kawashima K."/>
            <person name="Kimura T."/>
            <person name="Kishida Y."/>
            <person name="Kohara M."/>
            <person name="Matsumoto M."/>
            <person name="Matsuno A."/>
            <person name="Muraki A."/>
            <person name="Nakazaki N."/>
            <person name="Shimpo S."/>
            <person name="Sugimoto M."/>
            <person name="Takazawa M."/>
            <person name="Yamada M."/>
            <person name="Yasuda M."/>
            <person name="Tabata S."/>
        </authorList>
    </citation>
    <scope>NUCLEOTIDE SEQUENCE [LARGE SCALE GENOMIC DNA]</scope>
    <source>
        <strain>PCC 7120 / SAG 25.82 / UTEX 2576</strain>
    </source>
</reference>
<comment type="function">
    <text evidence="1">PsaA and PsaB bind P700, the primary electron donor of photosystem I (PSI), as well as the electron acceptors A0, A1 and FX. PSI is a plastocyanin/cytochrome c6-ferredoxin oxidoreductase, converting photonic excitation into a charge separation, which transfers an electron from the donor P700 chlorophyll pair to the spectroscopically characterized acceptors A0, A1, FX, FA and FB in turn. Oxidized P700 is reduced on the lumenal side of the thylakoid membrane by plastocyanin or cytochrome c6 (By similarity).</text>
</comment>
<comment type="catalytic activity">
    <reaction>
        <text>reduced [plastocyanin] + hnu + oxidized [2Fe-2S]-[ferredoxin] = oxidized [plastocyanin] + reduced [2Fe-2S]-[ferredoxin]</text>
        <dbReference type="Rhea" id="RHEA:30407"/>
        <dbReference type="Rhea" id="RHEA-COMP:10000"/>
        <dbReference type="Rhea" id="RHEA-COMP:10001"/>
        <dbReference type="Rhea" id="RHEA-COMP:10039"/>
        <dbReference type="Rhea" id="RHEA-COMP:10040"/>
        <dbReference type="ChEBI" id="CHEBI:29036"/>
        <dbReference type="ChEBI" id="CHEBI:30212"/>
        <dbReference type="ChEBI" id="CHEBI:33737"/>
        <dbReference type="ChEBI" id="CHEBI:33738"/>
        <dbReference type="ChEBI" id="CHEBI:49552"/>
        <dbReference type="EC" id="1.97.1.12"/>
    </reaction>
</comment>
<comment type="cofactor">
    <text evidence="1">PSI electron transfer chain: 5 chlorophyll a, 1 chlorophyll a', 2 phylloquinones and 3 4Fe-4S clusters. PSI core antenna: 90 chlorophyll a, 22 carotenoids, 3 phospholipids and 1 galactolipid. P700 is a chlorophyll a/chlorophyll a' dimer, A0 is one or more chlorophyll a, A1 is one or both phylloquinones and FX is a shared 4Fe-4S iron-sulfur center.</text>
</comment>
<comment type="subunit">
    <text evidence="1">The PsaA/B heterodimer binds the P700 chlorophyll special pair and subsequent electron acceptors. PSI consists of a core antenna complex that captures photons, and an electron transfer chain that converts photonic excitation into a charge separation. The cyanobacterial PSI reaction center is composed of one copy each of PsaA,B,C,D,E,F,I,J,K,L,M and X, and forms trimeric complexes (By similarity).</text>
</comment>
<comment type="subcellular location">
    <subcellularLocation>
        <location evidence="1">Cellular thylakoid membrane</location>
        <topology evidence="1">Multi-pass membrane protein</topology>
    </subcellularLocation>
</comment>
<comment type="similarity">
    <text evidence="3">Belongs to the PsaA/PsaB family.</text>
</comment>
<name>PSAB2_NOSS1</name>
<feature type="initiator methionine" description="Removed" evidence="1">
    <location>
        <position position="1"/>
    </location>
</feature>
<feature type="chain" id="PRO_0000088642" description="Photosystem I P700 chlorophyll a apoprotein A2 2">
    <location>
        <begin position="2"/>
        <end position="742"/>
    </location>
</feature>
<feature type="transmembrane region" description="Helical; Name=I" evidence="2">
    <location>
        <begin position="46"/>
        <end position="69"/>
    </location>
</feature>
<feature type="transmembrane region" description="Helical; Name=II" evidence="2">
    <location>
        <begin position="135"/>
        <end position="158"/>
    </location>
</feature>
<feature type="transmembrane region" description="Helical; Name=III" evidence="2">
    <location>
        <begin position="175"/>
        <end position="199"/>
    </location>
</feature>
<feature type="transmembrane region" description="Helical; Name=IV" evidence="2">
    <location>
        <begin position="273"/>
        <end position="291"/>
    </location>
</feature>
<feature type="transmembrane region" description="Helical; Name=V" evidence="2">
    <location>
        <begin position="334"/>
        <end position="357"/>
    </location>
</feature>
<feature type="transmembrane region" description="Helical; Name=VI" evidence="2">
    <location>
        <begin position="373"/>
        <end position="399"/>
    </location>
</feature>
<feature type="transmembrane region" description="Helical; Name=VII" evidence="2">
    <location>
        <begin position="421"/>
        <end position="443"/>
    </location>
</feature>
<feature type="transmembrane region" description="Helical; Name=VIII" evidence="2">
    <location>
        <begin position="524"/>
        <end position="542"/>
    </location>
</feature>
<feature type="transmembrane region" description="Helical; Name=IX" evidence="2">
    <location>
        <begin position="583"/>
        <end position="604"/>
    </location>
</feature>
<feature type="transmembrane region" description="Helical; Name=X" evidence="2">
    <location>
        <begin position="651"/>
        <end position="673"/>
    </location>
</feature>
<feature type="transmembrane region" description="Helical; Name=XI" evidence="2">
    <location>
        <begin position="715"/>
        <end position="735"/>
    </location>
</feature>
<feature type="binding site" evidence="1">
    <location>
        <position position="566"/>
    </location>
    <ligand>
        <name>[4Fe-4S] cluster</name>
        <dbReference type="ChEBI" id="CHEBI:49883"/>
        <note>ligand shared between dimeric partners</note>
    </ligand>
</feature>
<feature type="binding site" evidence="1">
    <location>
        <position position="575"/>
    </location>
    <ligand>
        <name>[4Fe-4S] cluster</name>
        <dbReference type="ChEBI" id="CHEBI:49883"/>
        <note>ligand shared between dimeric partners</note>
    </ligand>
</feature>
<feature type="binding site" description="axial binding residue" evidence="1">
    <location>
        <position position="662"/>
    </location>
    <ligand>
        <name>chlorophyll a</name>
        <dbReference type="ChEBI" id="CHEBI:58416"/>
        <label>B1</label>
    </ligand>
    <ligandPart>
        <name>Mg</name>
        <dbReference type="ChEBI" id="CHEBI:25107"/>
    </ligandPart>
</feature>
<feature type="binding site" description="axial binding residue" evidence="1">
    <location>
        <position position="670"/>
    </location>
    <ligand>
        <name>chlorophyll a</name>
        <dbReference type="ChEBI" id="CHEBI:58416"/>
        <label>B3</label>
    </ligand>
    <ligandPart>
        <name>Mg</name>
        <dbReference type="ChEBI" id="CHEBI:25107"/>
    </ligandPart>
</feature>
<feature type="binding site" evidence="1">
    <location>
        <position position="678"/>
    </location>
    <ligand>
        <name>chlorophyll a</name>
        <dbReference type="ChEBI" id="CHEBI:58416"/>
        <label>B3</label>
    </ligand>
</feature>
<feature type="binding site" evidence="1">
    <location>
        <position position="679"/>
    </location>
    <ligand>
        <name>phylloquinone</name>
        <dbReference type="ChEBI" id="CHEBI:18067"/>
        <label>B</label>
    </ligand>
</feature>
<sequence length="742" mass="83860">MATKYPKFSRDLAQDPTTRRIWYAIATGNDFESHDGMTEENLYQKIFATHFGHVAIIFLWASSLLFHVAWQGNFEQWIKDPLHIRPIAHAIWDPHFGKPAIEAFSQGGANYPVNIAYSGVYHWWYTIGMRTNNDLYQGSVFLLLLAALFLFAGWLHLQPKFRPSLTWFKSAEPRLNHHLAGLFGVSSLAWAGHLIHVAIPESRGVHVGWRNFLTTLPHPAGLTPFWTGNWGVYAQNADTTGHIFGTSQGAGTAILTFLGGFHPQTESLWLTDMAHHHLAIAVIFIIAGHMYRTNFGIGHSIKEMLNAKQFFGIRTEGQFNLPHQGLYDTYNNSLHFQLSIHLAALGTALSLVAQHMYSLPPYAFIAKDYTTQAALYTHHQYIAGFLMIGAFAHAGIFWIRDYDPEQNQGNVLDRVLKHKEAIISHLSWVSLFLGFHTLGIYVHNDVVVAFGTPEKQILIEPVFAQFIQAAHGKLLYGMDTLLSNPDSIAYTAWPNHANVWLPNWLDAINSGTNSLFLTIGPGDFLVHHAIALGLHTTTLICVKGALDARGTKLMPDKKDFGFTFPCDGPGRGGTCQTSSWEQSFYLALFWMLNLLGWVTFYWHWKHLGVWQGNVAQFNENSTYLMGWFRDYLWANSAQLINGYNPYGTNNLSVWAWMFLFGHLVWATGFMFLISWRGYWQELIETLVWAHERTPLANLVRWKDKPVALSIVQGWLVGLAHFTVGYILTYAAFLIASTAGKFG</sequence>
<accession>Q8YLI4</accession>
<proteinExistence type="inferred from homology"/>